<organism>
    <name type="scientific">Escherichia coli O157:H7 (strain EC4115 / EHEC)</name>
    <dbReference type="NCBI Taxonomy" id="444450"/>
    <lineage>
        <taxon>Bacteria</taxon>
        <taxon>Pseudomonadati</taxon>
        <taxon>Pseudomonadota</taxon>
        <taxon>Gammaproteobacteria</taxon>
        <taxon>Enterobacterales</taxon>
        <taxon>Enterobacteriaceae</taxon>
        <taxon>Escherichia</taxon>
    </lineage>
</organism>
<evidence type="ECO:0000255" key="1">
    <source>
        <dbReference type="HAMAP-Rule" id="MF_01534"/>
    </source>
</evidence>
<comment type="function">
    <text evidence="1">Activates expression of the rhaBAD and rhaT operons.</text>
</comment>
<comment type="subunit">
    <text evidence="1">Binds DNA as a dimer.</text>
</comment>
<comment type="subcellular location">
    <subcellularLocation>
        <location evidence="1">Cytoplasm</location>
    </subcellularLocation>
</comment>
<reference key="1">
    <citation type="journal article" date="2011" name="Proc. Natl. Acad. Sci. U.S.A.">
        <title>Genomic anatomy of Escherichia coli O157:H7 outbreaks.</title>
        <authorList>
            <person name="Eppinger M."/>
            <person name="Mammel M.K."/>
            <person name="Leclerc J.E."/>
            <person name="Ravel J."/>
            <person name="Cebula T.A."/>
        </authorList>
    </citation>
    <scope>NUCLEOTIDE SEQUENCE [LARGE SCALE GENOMIC DNA]</scope>
    <source>
        <strain>EC4115 / EHEC</strain>
    </source>
</reference>
<protein>
    <recommendedName>
        <fullName evidence="1">HTH-type transcriptional activator RhaS</fullName>
    </recommendedName>
    <alternativeName>
        <fullName evidence="1">L-rhamnose operon regulatory protein RhaS</fullName>
    </alternativeName>
</protein>
<dbReference type="EMBL" id="CP001164">
    <property type="protein sequence ID" value="ACI36588.1"/>
    <property type="molecule type" value="Genomic_DNA"/>
</dbReference>
<dbReference type="RefSeq" id="WP_000217135.1">
    <property type="nucleotide sequence ID" value="NC_011353.1"/>
</dbReference>
<dbReference type="SMR" id="B5YZ43"/>
<dbReference type="KEGG" id="ecf:ECH74115_5358"/>
<dbReference type="HOGENOM" id="CLU_000445_88_5_6"/>
<dbReference type="GO" id="GO:0005737">
    <property type="term" value="C:cytoplasm"/>
    <property type="evidence" value="ECO:0007669"/>
    <property type="project" value="UniProtKB-SubCell"/>
</dbReference>
<dbReference type="GO" id="GO:0003700">
    <property type="term" value="F:DNA-binding transcription factor activity"/>
    <property type="evidence" value="ECO:0007669"/>
    <property type="project" value="UniProtKB-UniRule"/>
</dbReference>
<dbReference type="GO" id="GO:0043565">
    <property type="term" value="F:sequence-specific DNA binding"/>
    <property type="evidence" value="ECO:0007669"/>
    <property type="project" value="InterPro"/>
</dbReference>
<dbReference type="GO" id="GO:0045893">
    <property type="term" value="P:positive regulation of DNA-templated transcription"/>
    <property type="evidence" value="ECO:0007669"/>
    <property type="project" value="UniProtKB-UniRule"/>
</dbReference>
<dbReference type="GO" id="GO:0019299">
    <property type="term" value="P:rhamnose metabolic process"/>
    <property type="evidence" value="ECO:0007669"/>
    <property type="project" value="UniProtKB-UniRule"/>
</dbReference>
<dbReference type="CDD" id="cd06977">
    <property type="entry name" value="cupin_RhaR_RhaS-like_N"/>
    <property type="match status" value="1"/>
</dbReference>
<dbReference type="FunFam" id="1.10.10.60:FF:000181">
    <property type="entry name" value="HTH-type transcriptional activator RhaS"/>
    <property type="match status" value="1"/>
</dbReference>
<dbReference type="FunFam" id="2.60.120.10:FF:000041">
    <property type="entry name" value="HTH-type transcriptional activator RhaS"/>
    <property type="match status" value="1"/>
</dbReference>
<dbReference type="Gene3D" id="1.10.10.60">
    <property type="entry name" value="Homeodomain-like"/>
    <property type="match status" value="1"/>
</dbReference>
<dbReference type="Gene3D" id="2.60.120.10">
    <property type="entry name" value="Jelly Rolls"/>
    <property type="match status" value="1"/>
</dbReference>
<dbReference type="HAMAP" id="MF_01534">
    <property type="entry name" value="HTH_type_RhaS"/>
    <property type="match status" value="1"/>
</dbReference>
<dbReference type="InterPro" id="IPR003313">
    <property type="entry name" value="AraC-bd"/>
</dbReference>
<dbReference type="InterPro" id="IPR050204">
    <property type="entry name" value="AraC_XylS_family_regulators"/>
</dbReference>
<dbReference type="InterPro" id="IPR009057">
    <property type="entry name" value="Homeodomain-like_sf"/>
</dbReference>
<dbReference type="InterPro" id="IPR037923">
    <property type="entry name" value="HTH-like"/>
</dbReference>
<dbReference type="InterPro" id="IPR018060">
    <property type="entry name" value="HTH_AraC"/>
</dbReference>
<dbReference type="InterPro" id="IPR018062">
    <property type="entry name" value="HTH_AraC-typ_CS"/>
</dbReference>
<dbReference type="InterPro" id="IPR047220">
    <property type="entry name" value="RhaR_RhaS-like_N"/>
</dbReference>
<dbReference type="InterPro" id="IPR014710">
    <property type="entry name" value="RmlC-like_jellyroll"/>
</dbReference>
<dbReference type="InterPro" id="IPR020449">
    <property type="entry name" value="Tscrpt_reg_AraC-type_HTH"/>
</dbReference>
<dbReference type="InterPro" id="IPR023609">
    <property type="entry name" value="Tscrpt_reg_HTH_RhaS"/>
</dbReference>
<dbReference type="NCBIfam" id="NF010028">
    <property type="entry name" value="PRK13503.1"/>
    <property type="match status" value="1"/>
</dbReference>
<dbReference type="PANTHER" id="PTHR46796:SF13">
    <property type="entry name" value="HTH-TYPE TRANSCRIPTIONAL ACTIVATOR RHAS"/>
    <property type="match status" value="1"/>
</dbReference>
<dbReference type="PANTHER" id="PTHR46796">
    <property type="entry name" value="HTH-TYPE TRANSCRIPTIONAL ACTIVATOR RHAS-RELATED"/>
    <property type="match status" value="1"/>
</dbReference>
<dbReference type="Pfam" id="PF02311">
    <property type="entry name" value="AraC_binding"/>
    <property type="match status" value="1"/>
</dbReference>
<dbReference type="Pfam" id="PF12833">
    <property type="entry name" value="HTH_18"/>
    <property type="match status" value="1"/>
</dbReference>
<dbReference type="PRINTS" id="PR00032">
    <property type="entry name" value="HTHARAC"/>
</dbReference>
<dbReference type="SMART" id="SM00342">
    <property type="entry name" value="HTH_ARAC"/>
    <property type="match status" value="1"/>
</dbReference>
<dbReference type="SUPFAM" id="SSF46689">
    <property type="entry name" value="Homeodomain-like"/>
    <property type="match status" value="2"/>
</dbReference>
<dbReference type="SUPFAM" id="SSF51215">
    <property type="entry name" value="Regulatory protein AraC"/>
    <property type="match status" value="1"/>
</dbReference>
<dbReference type="PROSITE" id="PS00041">
    <property type="entry name" value="HTH_ARAC_FAMILY_1"/>
    <property type="match status" value="1"/>
</dbReference>
<dbReference type="PROSITE" id="PS01124">
    <property type="entry name" value="HTH_ARAC_FAMILY_2"/>
    <property type="match status" value="1"/>
</dbReference>
<keyword id="KW-0010">Activator</keyword>
<keyword id="KW-0963">Cytoplasm</keyword>
<keyword id="KW-0238">DNA-binding</keyword>
<keyword id="KW-0677">Repeat</keyword>
<keyword id="KW-0684">Rhamnose metabolism</keyword>
<keyword id="KW-0804">Transcription</keyword>
<keyword id="KW-0805">Transcription regulation</keyword>
<proteinExistence type="inferred from homology"/>
<feature type="chain" id="PRO_1000200951" description="HTH-type transcriptional activator RhaS">
    <location>
        <begin position="1"/>
        <end position="278"/>
    </location>
</feature>
<feature type="domain" description="HTH araC/xylS-type" evidence="1">
    <location>
        <begin position="174"/>
        <end position="272"/>
    </location>
</feature>
<feature type="DNA-binding region" description="H-T-H motif" evidence="1">
    <location>
        <begin position="191"/>
        <end position="212"/>
    </location>
</feature>
<feature type="DNA-binding region" description="H-T-H motif" evidence="1">
    <location>
        <begin position="239"/>
        <end position="262"/>
    </location>
</feature>
<feature type="site" description="Interaction with sigma-70" evidence="1">
    <location>
        <position position="241"/>
    </location>
</feature>
<feature type="site" description="Interaction with sigma-70" evidence="1">
    <location>
        <position position="250"/>
    </location>
</feature>
<gene>
    <name evidence="1" type="primary">rhaS</name>
    <name type="ordered locus">ECH74115_5358</name>
</gene>
<accession>B5YZ43</accession>
<sequence length="278" mass="32296">MTVLHSVDFFPSGNASVAIEPRLPQADFPEHHHDFHEIVIVEHGTGIHVFNGQPYTITGGTVCFVRDHDRHLYEHTDNLCLTNVLYRSPDRFQFLAGLNQLLPQELDGQYPSHWRVNHSVLQQVRQLVAQMEQQEGENDLPSTASREILFMQLLLLLRKSSLQENLENSASRLNLLLAWLEDHFADEVNWDAVADQFSLSLRTLHRQLKQQTGLTPQRYLNRLRLMKARHLLRHSEASVTDIAYHCGFSDSNHFSTLFRREFNWSPRDIRQGRDGFLQ</sequence>
<name>RHAS_ECO5E</name>